<sequence length="357" mass="39731">MEGSSSAIARKTWELENNILPVEPTDSASDSIFHYDDASQAKIQQEKPWASDPNYFKRVHISALALLKMVVHARSGGTIEIMGLMQGKTEGDTIIVMDAFALPVEGTETRVNAQSDAYEYMVEYSQTSKLAGRLENVVGWYHSHPGYGCWLSGIDVSTQMLNQQYQEPFLAVVIDPTRTVSAGKVEIGAFRTYPEGHKISDDHVSEYQTIPLNKIEDFGVHCKQYYSLDITYFKSSLDSHLLDLLWNKYWVNTLSSSPLLGNGDYVAGQISDLAEKLEQAESQLANSRYGGIAPAGHQRRKEDEPQLAKITRDSAKITVEQVHGLMSQVIKDILFNSARQSKKSADDSSDPEPMITS</sequence>
<proteinExistence type="evidence at protein level"/>
<gene>
    <name evidence="12" type="primary">CSN5A</name>
    <name evidence="13" type="synonym">AJH1</name>
    <name evidence="11" type="synonym">CSN5B</name>
    <name evidence="15" type="ordered locus">At1g22920</name>
    <name evidence="16" type="ORF">F19G10.12</name>
</gene>
<dbReference type="EC" id="3.4.-.-"/>
<dbReference type="EMBL" id="AF087413">
    <property type="protein sequence ID" value="AAC36344.1"/>
    <property type="molecule type" value="mRNA"/>
</dbReference>
<dbReference type="EMBL" id="AF395062">
    <property type="protein sequence ID" value="AAL58105.1"/>
    <property type="molecule type" value="mRNA"/>
</dbReference>
<dbReference type="EMBL" id="AF042334">
    <property type="protein sequence ID" value="AAB96974.1"/>
    <property type="molecule type" value="mRNA"/>
</dbReference>
<dbReference type="EMBL" id="AF000657">
    <property type="protein sequence ID" value="AAB72159.1"/>
    <property type="molecule type" value="Genomic_DNA"/>
</dbReference>
<dbReference type="EMBL" id="CP002684">
    <property type="protein sequence ID" value="AEE30309.1"/>
    <property type="molecule type" value="Genomic_DNA"/>
</dbReference>
<dbReference type="EMBL" id="CP002684">
    <property type="protein sequence ID" value="AEE30310.1"/>
    <property type="molecule type" value="Genomic_DNA"/>
</dbReference>
<dbReference type="EMBL" id="BT029486">
    <property type="protein sequence ID" value="ABL66743.1"/>
    <property type="molecule type" value="mRNA"/>
</dbReference>
<dbReference type="EMBL" id="AY087510">
    <property type="protein sequence ID" value="AAM65053.1"/>
    <property type="molecule type" value="mRNA"/>
</dbReference>
<dbReference type="EMBL" id="BT003909">
    <property type="protein sequence ID" value="AAO41956.1"/>
    <property type="molecule type" value="mRNA"/>
</dbReference>
<dbReference type="PIR" id="C86363">
    <property type="entry name" value="C86363"/>
</dbReference>
<dbReference type="PIR" id="T52180">
    <property type="entry name" value="T52180"/>
</dbReference>
<dbReference type="RefSeq" id="NP_173705.1">
    <molecule id="Q8LAZ7-1"/>
    <property type="nucleotide sequence ID" value="NM_102139.2"/>
</dbReference>
<dbReference type="RefSeq" id="NP_973890.1">
    <molecule id="Q8LAZ7-2"/>
    <property type="nucleotide sequence ID" value="NM_202161.1"/>
</dbReference>
<dbReference type="SMR" id="Q8LAZ7"/>
<dbReference type="BioGRID" id="24138">
    <property type="interactions" value="154"/>
</dbReference>
<dbReference type="FunCoup" id="Q8LAZ7">
    <property type="interactions" value="4901"/>
</dbReference>
<dbReference type="IntAct" id="Q8LAZ7">
    <property type="interactions" value="153"/>
</dbReference>
<dbReference type="STRING" id="3702.Q8LAZ7"/>
<dbReference type="MEROPS" id="M67.A01"/>
<dbReference type="GlyGen" id="Q8LAZ7">
    <property type="glycosylation" value="1 site"/>
</dbReference>
<dbReference type="iPTMnet" id="Q8LAZ7"/>
<dbReference type="MetOSite" id="Q8LAZ7"/>
<dbReference type="PaxDb" id="3702-AT1G22920.1"/>
<dbReference type="ProteomicsDB" id="222623">
    <molecule id="Q8LAZ7-1"/>
</dbReference>
<dbReference type="EnsemblPlants" id="AT1G22920.1">
    <molecule id="Q8LAZ7-1"/>
    <property type="protein sequence ID" value="AT1G22920.1"/>
    <property type="gene ID" value="AT1G22920"/>
</dbReference>
<dbReference type="EnsemblPlants" id="AT1G22920.2">
    <molecule id="Q8LAZ7-2"/>
    <property type="protein sequence ID" value="AT1G22920.2"/>
    <property type="gene ID" value="AT1G22920"/>
</dbReference>
<dbReference type="GeneID" id="838899"/>
<dbReference type="Gramene" id="AT1G22920.1">
    <molecule id="Q8LAZ7-1"/>
    <property type="protein sequence ID" value="AT1G22920.1"/>
    <property type="gene ID" value="AT1G22920"/>
</dbReference>
<dbReference type="Gramene" id="AT1G22920.2">
    <molecule id="Q8LAZ7-2"/>
    <property type="protein sequence ID" value="AT1G22920.2"/>
    <property type="gene ID" value="AT1G22920"/>
</dbReference>
<dbReference type="KEGG" id="ath:AT1G22920"/>
<dbReference type="Araport" id="AT1G22920"/>
<dbReference type="TAIR" id="AT1G22920">
    <property type="gene designation" value="CSN5A"/>
</dbReference>
<dbReference type="eggNOG" id="KOG1554">
    <property type="taxonomic scope" value="Eukaryota"/>
</dbReference>
<dbReference type="InParanoid" id="Q8LAZ7"/>
<dbReference type="OMA" id="VKMKLFQ"/>
<dbReference type="OrthoDB" id="10266268at2759"/>
<dbReference type="PhylomeDB" id="Q8LAZ7"/>
<dbReference type="PRO" id="PR:Q8LAZ7"/>
<dbReference type="Proteomes" id="UP000006548">
    <property type="component" value="Chromosome 1"/>
</dbReference>
<dbReference type="ExpressionAtlas" id="Q8LAZ7">
    <property type="expression patterns" value="baseline and differential"/>
</dbReference>
<dbReference type="GO" id="GO:0008180">
    <property type="term" value="C:COP9 signalosome"/>
    <property type="evidence" value="ECO:0007669"/>
    <property type="project" value="UniProtKB-KW"/>
</dbReference>
<dbReference type="GO" id="GO:0005737">
    <property type="term" value="C:cytoplasm"/>
    <property type="evidence" value="ECO:0007669"/>
    <property type="project" value="UniProtKB-SubCell"/>
</dbReference>
<dbReference type="GO" id="GO:0046872">
    <property type="term" value="F:metal ion binding"/>
    <property type="evidence" value="ECO:0007669"/>
    <property type="project" value="UniProtKB-KW"/>
</dbReference>
<dbReference type="GO" id="GO:0008237">
    <property type="term" value="F:metallopeptidase activity"/>
    <property type="evidence" value="ECO:0007669"/>
    <property type="project" value="UniProtKB-KW"/>
</dbReference>
<dbReference type="GO" id="GO:0010387">
    <property type="term" value="P:COP9 signalosome assembly"/>
    <property type="evidence" value="ECO:0000315"/>
    <property type="project" value="TAIR"/>
</dbReference>
<dbReference type="GO" id="GO:0010100">
    <property type="term" value="P:negative regulation of photomorphogenesis"/>
    <property type="evidence" value="ECO:0000316"/>
    <property type="project" value="TAIR"/>
</dbReference>
<dbReference type="GO" id="GO:0010971">
    <property type="term" value="P:positive regulation of G2/M transition of mitotic cell cycle"/>
    <property type="evidence" value="ECO:0000315"/>
    <property type="project" value="TAIR"/>
</dbReference>
<dbReference type="GO" id="GO:0000338">
    <property type="term" value="P:protein deneddylation"/>
    <property type="evidence" value="ECO:0000315"/>
    <property type="project" value="TAIR"/>
</dbReference>
<dbReference type="GO" id="GO:0006508">
    <property type="term" value="P:proteolysis"/>
    <property type="evidence" value="ECO:0007669"/>
    <property type="project" value="UniProtKB-KW"/>
</dbReference>
<dbReference type="GO" id="GO:0009585">
    <property type="term" value="P:red, far-red light phototransduction"/>
    <property type="evidence" value="ECO:0007669"/>
    <property type="project" value="UniProtKB-KW"/>
</dbReference>
<dbReference type="GO" id="GO:0031347">
    <property type="term" value="P:regulation of defense response"/>
    <property type="evidence" value="ECO:0000315"/>
    <property type="project" value="TAIR"/>
</dbReference>
<dbReference type="GO" id="GO:0009733">
    <property type="term" value="P:response to auxin"/>
    <property type="evidence" value="ECO:0000316"/>
    <property type="project" value="TAIR"/>
</dbReference>
<dbReference type="GO" id="GO:0010093">
    <property type="term" value="P:specification of floral organ identity"/>
    <property type="evidence" value="ECO:0000315"/>
    <property type="project" value="TAIR"/>
</dbReference>
<dbReference type="CDD" id="cd08069">
    <property type="entry name" value="MPN_RPN11_CSN5"/>
    <property type="match status" value="1"/>
</dbReference>
<dbReference type="FunFam" id="3.40.140.10:FF:000003">
    <property type="entry name" value="COP9 signalosome complex subunit 5"/>
    <property type="match status" value="1"/>
</dbReference>
<dbReference type="Gene3D" id="3.40.140.10">
    <property type="entry name" value="Cytidine Deaminase, domain 2"/>
    <property type="match status" value="1"/>
</dbReference>
<dbReference type="InterPro" id="IPR040961">
    <property type="entry name" value="CSN5_C"/>
</dbReference>
<dbReference type="InterPro" id="IPR000555">
    <property type="entry name" value="JAMM/MPN+_dom"/>
</dbReference>
<dbReference type="InterPro" id="IPR050242">
    <property type="entry name" value="JAMM_MPN+_peptidase_M67A"/>
</dbReference>
<dbReference type="InterPro" id="IPR037518">
    <property type="entry name" value="MPN"/>
</dbReference>
<dbReference type="PANTHER" id="PTHR10410">
    <property type="entry name" value="EUKARYOTIC TRANSLATION INITIATION FACTOR 3 -RELATED"/>
    <property type="match status" value="1"/>
</dbReference>
<dbReference type="Pfam" id="PF18323">
    <property type="entry name" value="CSN5_C"/>
    <property type="match status" value="1"/>
</dbReference>
<dbReference type="Pfam" id="PF01398">
    <property type="entry name" value="JAB"/>
    <property type="match status" value="1"/>
</dbReference>
<dbReference type="SMART" id="SM00232">
    <property type="entry name" value="JAB_MPN"/>
    <property type="match status" value="1"/>
</dbReference>
<dbReference type="SUPFAM" id="SSF102712">
    <property type="entry name" value="JAB1/MPN domain"/>
    <property type="match status" value="1"/>
</dbReference>
<dbReference type="PROSITE" id="PS50249">
    <property type="entry name" value="MPN"/>
    <property type="match status" value="1"/>
</dbReference>
<accession>Q8LAZ7</accession>
<accession>A1A6G7</accession>
<accession>F4I325</accession>
<accession>O23130</accession>
<accession>O82524</accession>
<accession>Q84WE7</accession>
<reference key="1">
    <citation type="journal article" date="1998" name="Plant Cell">
        <title>Arabidopsis homologs of a c-Jun coactivator are present both in monomeric form and in the COP9 complex, and their abundance is differentially affected by the pleiotropic cop/det/fus mutations.</title>
        <authorList>
            <person name="Kwok S.F."/>
            <person name="Solano R."/>
            <person name="Tsuge T."/>
            <person name="Chamovitz D.A."/>
            <person name="Ecker J.R."/>
            <person name="Matsui M."/>
            <person name="Deng X.-W."/>
        </authorList>
    </citation>
    <scope>NUCLEOTIDE SEQUENCE [MRNA] (ISOFORM 1)</scope>
    <scope>FUNCTION</scope>
    <scope>SUBCELLULAR LOCATION</scope>
    <scope>TISSUE SPECIFICITY</scope>
    <scope>SUBUNIT</scope>
    <source>
        <tissue>Seedling</tissue>
    </source>
</reference>
<reference key="2">
    <citation type="journal article" date="2001" name="EMBO J.">
        <title>Subunit interaction maps for the regulatory particle of the 26S proteasome and the COP9 signalosome.</title>
        <authorList>
            <person name="Fu H."/>
            <person name="Reis N."/>
            <person name="Lee Y."/>
            <person name="Glickman M.H."/>
            <person name="Vierstra R."/>
        </authorList>
    </citation>
    <scope>NUCLEOTIDE SEQUENCE [MRNA] (ISOFORM 1)</scope>
    <source>
        <strain>cv. Columbia</strain>
    </source>
</reference>
<reference key="3">
    <citation type="submission" date="1998-01" db="EMBL/GenBank/DDBJ databases">
        <title>cDNA sequence for human JAB1 homolog from Arabidopsis thaliana (L.).</title>
        <authorList>
            <person name="Park D."/>
            <person name="Nam H.-G."/>
        </authorList>
    </citation>
    <scope>NUCLEOTIDE SEQUENCE [MRNA] (ISOFORM 1)</scope>
    <source>
        <strain>cv. Columbia</strain>
        <tissue>Flower</tissue>
    </source>
</reference>
<reference key="4">
    <citation type="journal article" date="2000" name="Nature">
        <title>Sequence and analysis of chromosome 1 of the plant Arabidopsis thaliana.</title>
        <authorList>
            <person name="Theologis A."/>
            <person name="Ecker J.R."/>
            <person name="Palm C.J."/>
            <person name="Federspiel N.A."/>
            <person name="Kaul S."/>
            <person name="White O."/>
            <person name="Alonso J."/>
            <person name="Altafi H."/>
            <person name="Araujo R."/>
            <person name="Bowman C.L."/>
            <person name="Brooks S.Y."/>
            <person name="Buehler E."/>
            <person name="Chan A."/>
            <person name="Chao Q."/>
            <person name="Chen H."/>
            <person name="Cheuk R.F."/>
            <person name="Chin C.W."/>
            <person name="Chung M.K."/>
            <person name="Conn L."/>
            <person name="Conway A.B."/>
            <person name="Conway A.R."/>
            <person name="Creasy T.H."/>
            <person name="Dewar K."/>
            <person name="Dunn P."/>
            <person name="Etgu P."/>
            <person name="Feldblyum T.V."/>
            <person name="Feng J.-D."/>
            <person name="Fong B."/>
            <person name="Fujii C.Y."/>
            <person name="Gill J.E."/>
            <person name="Goldsmith A.D."/>
            <person name="Haas B."/>
            <person name="Hansen N.F."/>
            <person name="Hughes B."/>
            <person name="Huizar L."/>
            <person name="Hunter J.L."/>
            <person name="Jenkins J."/>
            <person name="Johnson-Hopson C."/>
            <person name="Khan S."/>
            <person name="Khaykin E."/>
            <person name="Kim C.J."/>
            <person name="Koo H.L."/>
            <person name="Kremenetskaia I."/>
            <person name="Kurtz D.B."/>
            <person name="Kwan A."/>
            <person name="Lam B."/>
            <person name="Langin-Hooper S."/>
            <person name="Lee A."/>
            <person name="Lee J.M."/>
            <person name="Lenz C.A."/>
            <person name="Li J.H."/>
            <person name="Li Y.-P."/>
            <person name="Lin X."/>
            <person name="Liu S.X."/>
            <person name="Liu Z.A."/>
            <person name="Luros J.S."/>
            <person name="Maiti R."/>
            <person name="Marziali A."/>
            <person name="Militscher J."/>
            <person name="Miranda M."/>
            <person name="Nguyen M."/>
            <person name="Nierman W.C."/>
            <person name="Osborne B.I."/>
            <person name="Pai G."/>
            <person name="Peterson J."/>
            <person name="Pham P.K."/>
            <person name="Rizzo M."/>
            <person name="Rooney T."/>
            <person name="Rowley D."/>
            <person name="Sakano H."/>
            <person name="Salzberg S.L."/>
            <person name="Schwartz J.R."/>
            <person name="Shinn P."/>
            <person name="Southwick A.M."/>
            <person name="Sun H."/>
            <person name="Tallon L.J."/>
            <person name="Tambunga G."/>
            <person name="Toriumi M.J."/>
            <person name="Town C.D."/>
            <person name="Utterback T."/>
            <person name="Van Aken S."/>
            <person name="Vaysberg M."/>
            <person name="Vysotskaia V.S."/>
            <person name="Walker M."/>
            <person name="Wu D."/>
            <person name="Yu G."/>
            <person name="Fraser C.M."/>
            <person name="Venter J.C."/>
            <person name="Davis R.W."/>
        </authorList>
    </citation>
    <scope>NUCLEOTIDE SEQUENCE [LARGE SCALE GENOMIC DNA]</scope>
    <source>
        <strain>cv. Columbia</strain>
    </source>
</reference>
<reference key="5">
    <citation type="journal article" date="2017" name="Plant J.">
        <title>Araport11: a complete reannotation of the Arabidopsis thaliana reference genome.</title>
        <authorList>
            <person name="Cheng C.Y."/>
            <person name="Krishnakumar V."/>
            <person name="Chan A.P."/>
            <person name="Thibaud-Nissen F."/>
            <person name="Schobel S."/>
            <person name="Town C.D."/>
        </authorList>
    </citation>
    <scope>GENOME REANNOTATION</scope>
    <source>
        <strain>cv. Columbia</strain>
    </source>
</reference>
<reference key="6">
    <citation type="submission" date="2006-12" db="EMBL/GenBank/DDBJ databases">
        <title>Arabidopsis ORF clones.</title>
        <authorList>
            <person name="Bautista V.R."/>
            <person name="Kim C.J."/>
            <person name="Chen H."/>
            <person name="Quinitio C."/>
            <person name="Ecker J.R."/>
        </authorList>
    </citation>
    <scope>NUCLEOTIDE SEQUENCE [LARGE SCALE MRNA] (ISOFORM 1)</scope>
</reference>
<reference key="7">
    <citation type="submission" date="2002-03" db="EMBL/GenBank/DDBJ databases">
        <title>Full-length cDNA from Arabidopsis thaliana.</title>
        <authorList>
            <person name="Brover V.V."/>
            <person name="Troukhan M.E."/>
            <person name="Alexandrov N.A."/>
            <person name="Lu Y.-P."/>
            <person name="Flavell R.B."/>
            <person name="Feldmann K.A."/>
        </authorList>
    </citation>
    <scope>NUCLEOTIDE SEQUENCE [LARGE SCALE MRNA] (ISOFORM 1)</scope>
</reference>
<reference key="8">
    <citation type="journal article" date="2003" name="Science">
        <title>Empirical analysis of transcriptional activity in the Arabidopsis genome.</title>
        <authorList>
            <person name="Yamada K."/>
            <person name="Lim J."/>
            <person name="Dale J.M."/>
            <person name="Chen H."/>
            <person name="Shinn P."/>
            <person name="Palm C.J."/>
            <person name="Southwick A.M."/>
            <person name="Wu H.C."/>
            <person name="Kim C.J."/>
            <person name="Nguyen M."/>
            <person name="Pham P.K."/>
            <person name="Cheuk R.F."/>
            <person name="Karlin-Newmann G."/>
            <person name="Liu S.X."/>
            <person name="Lam B."/>
            <person name="Sakano H."/>
            <person name="Wu T."/>
            <person name="Yu G."/>
            <person name="Miranda M."/>
            <person name="Quach H.L."/>
            <person name="Tripp M."/>
            <person name="Chang C.H."/>
            <person name="Lee J.M."/>
            <person name="Toriumi M.J."/>
            <person name="Chan M.M."/>
            <person name="Tang C.C."/>
            <person name="Onodera C.S."/>
            <person name="Deng J.M."/>
            <person name="Akiyama K."/>
            <person name="Ansari Y."/>
            <person name="Arakawa T."/>
            <person name="Banh J."/>
            <person name="Banno F."/>
            <person name="Bowser L."/>
            <person name="Brooks S.Y."/>
            <person name="Carninci P."/>
            <person name="Chao Q."/>
            <person name="Choy N."/>
            <person name="Enju A."/>
            <person name="Goldsmith A.D."/>
            <person name="Gurjal M."/>
            <person name="Hansen N.F."/>
            <person name="Hayashizaki Y."/>
            <person name="Johnson-Hopson C."/>
            <person name="Hsuan V.W."/>
            <person name="Iida K."/>
            <person name="Karnes M."/>
            <person name="Khan S."/>
            <person name="Koesema E."/>
            <person name="Ishida J."/>
            <person name="Jiang P.X."/>
            <person name="Jones T."/>
            <person name="Kawai J."/>
            <person name="Kamiya A."/>
            <person name="Meyers C."/>
            <person name="Nakajima M."/>
            <person name="Narusaka M."/>
            <person name="Seki M."/>
            <person name="Sakurai T."/>
            <person name="Satou M."/>
            <person name="Tamse R."/>
            <person name="Vaysberg M."/>
            <person name="Wallender E.K."/>
            <person name="Wong C."/>
            <person name="Yamamura Y."/>
            <person name="Yuan S."/>
            <person name="Shinozaki K."/>
            <person name="Davis R.W."/>
            <person name="Theologis A."/>
            <person name="Ecker J.R."/>
        </authorList>
    </citation>
    <scope>NUCLEOTIDE SEQUENCE [LARGE SCALE MRNA] OF 219-357 (ISOFORM 1)</scope>
    <source>
        <strain>cv. Columbia</strain>
    </source>
</reference>
<reference key="9">
    <citation type="journal article" date="2001" name="Science">
        <title>Interactions of the COP9 signalosome with the E3 ubiquitin ligase SCF(TIR1) in mediating auxin response.</title>
        <authorList>
            <person name="Schwechheimer C."/>
            <person name="Serino G."/>
            <person name="Callis J."/>
            <person name="Crosby W.L."/>
            <person name="Lyapina S."/>
            <person name="Deshaies R.J."/>
            <person name="Gray W.M."/>
            <person name="Estelle M."/>
            <person name="Deng X.-W."/>
        </authorList>
    </citation>
    <scope>FUNCTION</scope>
</reference>
<reference key="10">
    <citation type="journal article" date="2003" name="Plant Cell">
        <title>Characterization of the last subunit of the Arabidopsis COP9 signalosome: implications for the overall structure and origin of the complex.</title>
        <authorList>
            <person name="Serino G."/>
            <person name="Su H."/>
            <person name="Peng Z."/>
            <person name="Tsuge T."/>
            <person name="Wei N."/>
            <person name="Gu H."/>
            <person name="Deng X.-W."/>
        </authorList>
    </citation>
    <scope>INTERACTION WITH CSN4 AND CSN6</scope>
</reference>
<reference key="11">
    <citation type="journal article" date="2004" name="Plant Cell">
        <title>The Arabidopsis CSN5A and CSN5B subunits are present in distinct COP9 signalosome complexes, and mutations in their JAMM domains exhibit differential dominant negative effects on development.</title>
        <authorList>
            <person name="Gusmaroli G."/>
            <person name="Feng S."/>
            <person name="Deng X.W."/>
        </authorList>
    </citation>
    <scope>FUNCTION</scope>
    <scope>SUBUNIT</scope>
    <scope>MUTAGENESIS OF HIS-142; HIS-144; CYS-149; ASP-155 AND ASP-175</scope>
</reference>
<reference key="12">
    <citation type="journal article" date="2005" name="Plant Cell">
        <title>Loss of the CONSTITUTIVE PHOTOMORPHOGENIC9 signalosome subunit 5 is sufficient to cause the cop/det/fus mutant phenotype in Arabidopsis.</title>
        <authorList>
            <person name="Dohmann E.M."/>
            <person name="Kuhnle C."/>
            <person name="Schwechheimer C."/>
        </authorList>
    </citation>
    <scope>FUNCTION</scope>
    <scope>DISRUPTION PHENOTYPE</scope>
</reference>
<reference key="13">
    <citation type="journal article" date="2007" name="Plant Cell">
        <title>Role of the MPN subunits in COP9 signalosome assembly and activity, and their regulatory interaction with Arabidopsis Cullin3-based E3 ligases.</title>
        <authorList>
            <person name="Gusmaroli G."/>
            <person name="Figueroa P."/>
            <person name="Serino G."/>
            <person name="Deng X.W."/>
        </authorList>
    </citation>
    <scope>FUNCTION</scope>
    <scope>DISRUPTION PHENOTYPE</scope>
</reference>
<reference key="14">
    <citation type="journal article" date="2012" name="Mol. Cell. Proteomics">
        <title>Comparative large-scale characterisation of plant vs. mammal proteins reveals similar and idiosyncratic N-alpha acetylation features.</title>
        <authorList>
            <person name="Bienvenut W.V."/>
            <person name="Sumpton D."/>
            <person name="Martinez A."/>
            <person name="Lilla S."/>
            <person name="Espagne C."/>
            <person name="Meinnel T."/>
            <person name="Giglione C."/>
        </authorList>
    </citation>
    <scope>ACETYLATION [LARGE SCALE ANALYSIS] AT MET-1</scope>
    <scope>IDENTIFICATION BY MASS SPECTROMETRY [LARGE SCALE ANALYSIS]</scope>
</reference>
<reference key="15">
    <citation type="journal article" date="2013" name="Plant Cell">
        <title>Arabidopsis CSN5B interacts with VTC1 and modulates ascorbic acid synthesis.</title>
        <authorList>
            <person name="Wang J."/>
            <person name="Yu Y."/>
            <person name="Zhang Z."/>
            <person name="Quan R."/>
            <person name="Zhang H."/>
            <person name="Ma L."/>
            <person name="Deng X.W."/>
            <person name="Huang R."/>
        </authorList>
    </citation>
    <scope>INTERACTION WITH CYT1</scope>
</reference>
<protein>
    <recommendedName>
        <fullName>COP9 signalosome complex subunit 5a</fullName>
        <shortName>Signalosome subunit 5a</shortName>
        <ecNumber>3.4.-.-</ecNumber>
    </recommendedName>
    <alternativeName>
        <fullName>Jun activation domain-binding homolog 1</fullName>
    </alternativeName>
</protein>
<comment type="function">
    <text evidence="1 4 6 7 8 10">Probable protease subunit of the COP9 signalosome complex (CSN), a complex involved in various cellular and developmental processes such as photomorphogenesis and auxin and jasmonate responses. The CSN complex is an essential regulator of the ubiquitin (Ubl) conjugation pathway by mediating the deneddylation of the cullin subunits of the SCF-type E3 ligase complexes, leading to decrease the Ubl ligase activity of SCF. In the complex, it probably acts as the catalytic center that mediates the cleavage of Nedd8 from cullins. It however has no metalloprotease activity by itself and requires the other subunits of the CSN complex (By similarity). The CSN complex is involved in repression of photomorphogenesis in darkness by regulating the activity of COP1-containing Ubl ligase complexes. The complex is also required for degradation of PSIAA6 by regulating the activity of the Ubl ligase SCF-TIR complex. Involved in CSN's deneddylation/derubylation activity (PubMed:15486099). Required for the deneddylation of all cullins (PubMed:15923347, PubMed:17307927). Essential for the structural integrity of the CSN holocomplex (PubMed:17307927).</text>
</comment>
<comment type="cofactor">
    <cofactor evidence="1">
        <name>a divalent metal cation</name>
        <dbReference type="ChEBI" id="CHEBI:60240"/>
    </cofactor>
</comment>
<comment type="subunit">
    <text evidence="5 6 9 10">Component of the CSN complex, probably composed of CSN1, CSN2, CSN3, CSN4, CSN5 (CSN5A or CSN5B), CSN6 (CSN6A or CSN6B), CSN7 and CSN8 (PubMed:12615944, PubMed:15486099, PubMed:9811788). CSN5A or CSN5B are present within distinct CSN complexes each containing only one copy of CSN5 (PubMed:15486099). Interacts with itself (PubMed:9811788). In the complex, it is located in the center and probably interacts directly with CSN4 and CSN6A or CSN6B (PubMed:12615944, PubMed:9811788). Present also in subcomplex forms which inculdes CSN3 (PubMed:15486099). Also exists as monomeric form (PubMed:9811788). Interacts with CYT1 in vitro, but not in planta (PubMed:23424245).</text>
</comment>
<comment type="interaction">
    <interactant intactId="EBI-531132">
        <id>Q8LAZ7</id>
    </interactant>
    <interactant intactId="EBI-530996">
        <id>P45432</id>
        <label>CSN1</label>
    </interactant>
    <organismsDiffer>false</organismsDiffer>
    <experiments>3</experiments>
</comment>
<comment type="interaction">
    <interactant intactId="EBI-531132">
        <id>Q8LAZ7</id>
    </interactant>
    <interactant intactId="EBI-531094">
        <id>Q8W206</id>
        <label>CSN6A</label>
    </interactant>
    <organismsDiffer>false</organismsDiffer>
    <experiments>3</experiments>
</comment>
<comment type="interaction">
    <interactant intactId="EBI-531132">
        <id>Q8LAZ7</id>
    </interactant>
    <interactant intactId="EBI-4481871">
        <id>Q1EC57</id>
    </interactant>
    <organismsDiffer>false</organismsDiffer>
    <experiments>2</experiments>
</comment>
<comment type="subcellular location">
    <subcellularLocation>
        <location evidence="10">Cytoplasm</location>
    </subcellularLocation>
    <subcellularLocation>
        <location evidence="10">Nucleus</location>
    </subcellularLocation>
</comment>
<comment type="alternative products">
    <event type="alternative splicing"/>
    <isoform>
        <id>Q8LAZ7-1</id>
        <name>1</name>
        <sequence type="displayed"/>
    </isoform>
    <isoform>
        <id>Q8LAZ7-2</id>
        <name>2</name>
        <sequence type="described" ref="VSP_058794"/>
    </isoform>
</comment>
<comment type="tissue specificity">
    <text evidence="10">Ubiquitously expressed. Highly expressed in flowers and roots. Expressed at lower level in seedlings and siliques.</text>
</comment>
<comment type="domain">
    <text evidence="1">The JAMM motif is essential for the protease activity of the CSN complex resulting in deneddylation of cullins. It constitutes the catalytic center of the complex (By similarity).</text>
</comment>
<comment type="disruption phenotype">
    <text evidence="7 8">Short hypocotyl and open cotyledons in dark-grown seedling, accumulation of anthocyanin and expression of light-induced genes in the dark resulting from an impaired cullin deneddylation (PubMed:15923347). Severe developmental defects resulting in dwarf stature and loss of apical dominance (PubMed:17307927). Csn5a and csn5b double mutants are lethal at the seedling stage (PubMed:17307927).</text>
</comment>
<comment type="similarity">
    <text evidence="14">Belongs to the peptidase M67A family. CSN5 subfamily.</text>
</comment>
<keyword id="KW-0007">Acetylation</keyword>
<keyword id="KW-0025">Alternative splicing</keyword>
<keyword id="KW-0963">Cytoplasm</keyword>
<keyword id="KW-0217">Developmental protein</keyword>
<keyword id="KW-0378">Hydrolase</keyword>
<keyword id="KW-0479">Metal-binding</keyword>
<keyword id="KW-0482">Metalloprotease</keyword>
<keyword id="KW-0539">Nucleus</keyword>
<keyword id="KW-0607">Phytochrome signaling pathway</keyword>
<keyword id="KW-0645">Protease</keyword>
<keyword id="KW-1185">Reference proteome</keyword>
<keyword id="KW-0736">Signalosome</keyword>
<keyword id="KW-0862">Zinc</keyword>
<feature type="chain" id="PRO_0000194844" description="COP9 signalosome complex subunit 5a">
    <location>
        <begin position="1"/>
        <end position="357"/>
    </location>
</feature>
<feature type="domain" description="MPN" evidence="2">
    <location>
        <begin position="59"/>
        <end position="196"/>
    </location>
</feature>
<feature type="region of interest" description="Disordered" evidence="3">
    <location>
        <begin position="338"/>
        <end position="357"/>
    </location>
</feature>
<feature type="short sequence motif" description="JAMM motif" evidence="2">
    <location>
        <begin position="142"/>
        <end position="155"/>
    </location>
</feature>
<feature type="binding site" evidence="2">
    <location>
        <position position="142"/>
    </location>
    <ligand>
        <name>Zn(2+)</name>
        <dbReference type="ChEBI" id="CHEBI:29105"/>
        <note>catalytic</note>
    </ligand>
</feature>
<feature type="binding site" evidence="2">
    <location>
        <position position="144"/>
    </location>
    <ligand>
        <name>Zn(2+)</name>
        <dbReference type="ChEBI" id="CHEBI:29105"/>
        <note>catalytic</note>
    </ligand>
</feature>
<feature type="binding site" evidence="2">
    <location>
        <position position="155"/>
    </location>
    <ligand>
        <name>Zn(2+)</name>
        <dbReference type="ChEBI" id="CHEBI:29105"/>
        <note>catalytic</note>
    </ligand>
</feature>
<feature type="modified residue" description="N-acetylmethionine" evidence="17">
    <location>
        <position position="1"/>
    </location>
</feature>
<feature type="splice variant" id="VSP_058794" description="In isoform 2.">
    <original>IKDILFNSARQSKKSADDSSDPEPMITS</original>
    <variation>SKYNLTMLILFPLAVNGSMKLT</variation>
    <location>
        <begin position="330"/>
        <end position="357"/>
    </location>
</feature>
<feature type="mutagenesis site" description="No effect on CSN complex integrity but impaired CUL1 derubylation." evidence="6">
    <original>H</original>
    <variation>A</variation>
    <location>
        <position position="142"/>
    </location>
</feature>
<feature type="mutagenesis site" description="No effect on CSN complex integrity but impaired CUL1 derubylation." evidence="6">
    <original>H</original>
    <variation>A</variation>
    <location>
        <position position="144"/>
    </location>
</feature>
<feature type="mutagenesis site" description="No effect on CSN complex integrity and no effect on CUL1 derubylation." evidence="6">
    <original>C</original>
    <variation>A</variation>
    <location>
        <position position="149"/>
    </location>
</feature>
<feature type="mutagenesis site" description="No effect on CSN complex integrity but impaired CUL1 derubylation." evidence="6">
    <original>C</original>
    <variation>S</variation>
    <location>
        <position position="149"/>
    </location>
</feature>
<feature type="mutagenesis site" description="No effect on CSN complex integrity but impaired CUL1 derubylation." evidence="6">
    <original>D</original>
    <variation>N</variation>
    <location>
        <position position="155"/>
    </location>
</feature>
<feature type="mutagenesis site" description="No effect on CSN complex integrity but impaired CUL1 derubylation." evidence="6">
    <original>D</original>
    <variation>E</variation>
    <variation>N</variation>
    <location>
        <position position="175"/>
    </location>
</feature>
<feature type="sequence conflict" description="In Ref. 7; AAM65053." evidence="14" ref="7">
    <original>P</original>
    <variation>R</variation>
    <location>
        <position position="21"/>
    </location>
</feature>
<feature type="sequence conflict" description="In Ref. 1; AAC36344." evidence="14" ref="1">
    <original>W</original>
    <variation>G</variation>
    <location>
        <position position="246"/>
    </location>
</feature>
<name>CSN5A_ARATH</name>
<organism>
    <name type="scientific">Arabidopsis thaliana</name>
    <name type="common">Mouse-ear cress</name>
    <dbReference type="NCBI Taxonomy" id="3702"/>
    <lineage>
        <taxon>Eukaryota</taxon>
        <taxon>Viridiplantae</taxon>
        <taxon>Streptophyta</taxon>
        <taxon>Embryophyta</taxon>
        <taxon>Tracheophyta</taxon>
        <taxon>Spermatophyta</taxon>
        <taxon>Magnoliopsida</taxon>
        <taxon>eudicotyledons</taxon>
        <taxon>Gunneridae</taxon>
        <taxon>Pentapetalae</taxon>
        <taxon>rosids</taxon>
        <taxon>malvids</taxon>
        <taxon>Brassicales</taxon>
        <taxon>Brassicaceae</taxon>
        <taxon>Camelineae</taxon>
        <taxon>Arabidopsis</taxon>
    </lineage>
</organism>
<evidence type="ECO:0000250" key="1"/>
<evidence type="ECO:0000255" key="2">
    <source>
        <dbReference type="PROSITE-ProRule" id="PRU01182"/>
    </source>
</evidence>
<evidence type="ECO:0000256" key="3">
    <source>
        <dbReference type="SAM" id="MobiDB-lite"/>
    </source>
</evidence>
<evidence type="ECO:0000269" key="4">
    <source>
    </source>
</evidence>
<evidence type="ECO:0000269" key="5">
    <source>
    </source>
</evidence>
<evidence type="ECO:0000269" key="6">
    <source>
    </source>
</evidence>
<evidence type="ECO:0000269" key="7">
    <source>
    </source>
</evidence>
<evidence type="ECO:0000269" key="8">
    <source>
    </source>
</evidence>
<evidence type="ECO:0000269" key="9">
    <source>
    </source>
</evidence>
<evidence type="ECO:0000269" key="10">
    <source>
    </source>
</evidence>
<evidence type="ECO:0000303" key="11">
    <source>
    </source>
</evidence>
<evidence type="ECO:0000303" key="12">
    <source>
    </source>
</evidence>
<evidence type="ECO:0000303" key="13">
    <source>
    </source>
</evidence>
<evidence type="ECO:0000305" key="14"/>
<evidence type="ECO:0000312" key="15">
    <source>
        <dbReference type="Araport" id="AT1G22920"/>
    </source>
</evidence>
<evidence type="ECO:0000312" key="16">
    <source>
        <dbReference type="EMBL" id="AAB72159.1"/>
    </source>
</evidence>
<evidence type="ECO:0007744" key="17">
    <source>
    </source>
</evidence>